<reference key="1">
    <citation type="journal article" date="1998" name="FEBS Lett.">
        <title>Isolation and characterization of the Candida albicans gene for mRNA 5'-triphosphatase: association of mRNA 5'-triphosphatase and mRNA 5'-guanylyltransferase activities is essential for the function of mRNA 5'-capping enzyme in vivo.</title>
        <authorList>
            <person name="Yamada-Okabe T."/>
            <person name="Mio T."/>
            <person name="Matsui M."/>
            <person name="Kashima Y."/>
            <person name="Arisawa M."/>
            <person name="Yamada-Okabe H."/>
        </authorList>
    </citation>
    <scope>NUCLEOTIDE SEQUENCE [GENOMIC DNA]</scope>
    <source>
        <strain>ATCC 10259 / CBS 5796 / DSM 5817 / JCM 2078 / NBRC 1060</strain>
    </source>
</reference>
<reference key="2">
    <citation type="journal article" date="2004" name="Proc. Natl. Acad. Sci. U.S.A.">
        <title>The diploid genome sequence of Candida albicans.</title>
        <authorList>
            <person name="Jones T."/>
            <person name="Federspiel N.A."/>
            <person name="Chibana H."/>
            <person name="Dungan J."/>
            <person name="Kalman S."/>
            <person name="Magee B.B."/>
            <person name="Newport G."/>
            <person name="Thorstenson Y.R."/>
            <person name="Agabian N."/>
            <person name="Magee P.T."/>
            <person name="Davis R.W."/>
            <person name="Scherer S."/>
        </authorList>
    </citation>
    <scope>NUCLEOTIDE SEQUENCE [LARGE SCALE GENOMIC DNA]</scope>
    <source>
        <strain>SC5314 / ATCC MYA-2876</strain>
    </source>
</reference>
<reference key="3">
    <citation type="journal article" date="2007" name="Genome Biol.">
        <title>Assembly of the Candida albicans genome into sixteen supercontigs aligned on the eight chromosomes.</title>
        <authorList>
            <person name="van het Hoog M."/>
            <person name="Rast T.J."/>
            <person name="Martchenko M."/>
            <person name="Grindle S."/>
            <person name="Dignard D."/>
            <person name="Hogues H."/>
            <person name="Cuomo C."/>
            <person name="Berriman M."/>
            <person name="Scherer S."/>
            <person name="Magee B.B."/>
            <person name="Whiteway M."/>
            <person name="Chibana H."/>
            <person name="Nantel A."/>
            <person name="Magee P.T."/>
        </authorList>
    </citation>
    <scope>GENOME REANNOTATION</scope>
    <source>
        <strain>SC5314 / ATCC MYA-2876</strain>
    </source>
</reference>
<reference key="4">
    <citation type="journal article" date="2013" name="Genome Biol.">
        <title>Assembly of a phased diploid Candida albicans genome facilitates allele-specific measurements and provides a simple model for repeat and indel structure.</title>
        <authorList>
            <person name="Muzzey D."/>
            <person name="Schwartz K."/>
            <person name="Weissman J.S."/>
            <person name="Sherlock G."/>
        </authorList>
    </citation>
    <scope>NUCLEOTIDE SEQUENCE [LARGE SCALE GENOMIC DNA]</scope>
    <scope>GENOME REANNOTATION</scope>
    <source>
        <strain>SC5314 / ATCC MYA-2876</strain>
    </source>
</reference>
<gene>
    <name type="primary">CET1</name>
    <name type="ordered locus">CAALFM_CR02090CA</name>
    <name type="ORF">CaO19.10140</name>
    <name type="ORF">CaO19.2609</name>
</gene>
<accession>O93803</accession>
<accession>A0A1D8PS47</accession>
<accession>Q5A957</accession>
<organism>
    <name type="scientific">Candida albicans (strain SC5314 / ATCC MYA-2876)</name>
    <name type="common">Yeast</name>
    <dbReference type="NCBI Taxonomy" id="237561"/>
    <lineage>
        <taxon>Eukaryota</taxon>
        <taxon>Fungi</taxon>
        <taxon>Dikarya</taxon>
        <taxon>Ascomycota</taxon>
        <taxon>Saccharomycotina</taxon>
        <taxon>Pichiomycetes</taxon>
        <taxon>Debaryomycetaceae</taxon>
        <taxon>Candida/Lodderomyces clade</taxon>
        <taxon>Candida</taxon>
    </lineage>
</organism>
<comment type="function">
    <text evidence="2">First step of mRNA capping. Converts the 5'-triphosphate end of a nascent mRNA chain into a diphosphate end.</text>
</comment>
<comment type="catalytic activity">
    <reaction evidence="2">
        <text>a 5'-end triphospho-ribonucleoside in mRNA + H2O = a 5'-end diphospho-ribonucleoside in mRNA + phosphate + H(+)</text>
        <dbReference type="Rhea" id="RHEA:67004"/>
        <dbReference type="Rhea" id="RHEA-COMP:17164"/>
        <dbReference type="Rhea" id="RHEA-COMP:17165"/>
        <dbReference type="ChEBI" id="CHEBI:15377"/>
        <dbReference type="ChEBI" id="CHEBI:15378"/>
        <dbReference type="ChEBI" id="CHEBI:43474"/>
        <dbReference type="ChEBI" id="CHEBI:167616"/>
        <dbReference type="ChEBI" id="CHEBI:167618"/>
        <dbReference type="EC" id="3.6.1.74"/>
    </reaction>
    <physiologicalReaction direction="left-to-right" evidence="2">
        <dbReference type="Rhea" id="RHEA:67005"/>
    </physiologicalReaction>
</comment>
<comment type="cofactor">
    <cofactor evidence="2">
        <name>Mg(2+)</name>
        <dbReference type="ChEBI" id="CHEBI:18420"/>
    </cofactor>
</comment>
<comment type="subunit">
    <text evidence="2">Heterodimer. The mRNA-capping enzyme is composed of two separate chains alpha and beta, respectively a mRNA guanylyltransferase and an mRNA 5'-triphosphate monophosphatase.</text>
</comment>
<comment type="subcellular location">
    <subcellularLocation>
        <location evidence="1">Nucleus</location>
    </subcellularLocation>
</comment>
<comment type="similarity">
    <text evidence="4">Belongs to the fungal TPase family.</text>
</comment>
<dbReference type="EC" id="3.6.1.74" evidence="2"/>
<dbReference type="EMBL" id="AB016242">
    <property type="protein sequence ID" value="BAA33965.1"/>
    <property type="molecule type" value="Genomic_DNA"/>
</dbReference>
<dbReference type="EMBL" id="CP017630">
    <property type="protein sequence ID" value="AOW30959.1"/>
    <property type="molecule type" value="Genomic_DNA"/>
</dbReference>
<dbReference type="RefSeq" id="XP_718274.1">
    <property type="nucleotide sequence ID" value="XM_713181.1"/>
</dbReference>
<dbReference type="SMR" id="O93803"/>
<dbReference type="BioGRID" id="1223080">
    <property type="interactions" value="1"/>
</dbReference>
<dbReference type="FunCoup" id="O93803">
    <property type="interactions" value="80"/>
</dbReference>
<dbReference type="STRING" id="237561.O93803"/>
<dbReference type="EnsemblFungi" id="CR_02090C_A-T">
    <property type="protein sequence ID" value="CR_02090C_A-T-p1"/>
    <property type="gene ID" value="CR_02090C_A"/>
</dbReference>
<dbReference type="GeneID" id="3640140"/>
<dbReference type="KEGG" id="cal:CAALFM_CR02090CA"/>
<dbReference type="CGD" id="CAL0000199068">
    <property type="gene designation" value="CET1"/>
</dbReference>
<dbReference type="VEuPathDB" id="FungiDB:CR_02090C_A"/>
<dbReference type="eggNOG" id="ENOG502RZAX">
    <property type="taxonomic scope" value="Eukaryota"/>
</dbReference>
<dbReference type="HOGENOM" id="CLU_028201_0_0_1"/>
<dbReference type="InParanoid" id="O93803"/>
<dbReference type="OMA" id="DWVYATI"/>
<dbReference type="OrthoDB" id="272147at2759"/>
<dbReference type="BRENDA" id="3.6.1.74">
    <property type="organism ID" value="1096"/>
</dbReference>
<dbReference type="PRO" id="PR:O93803"/>
<dbReference type="Proteomes" id="UP000000559">
    <property type="component" value="Chromosome R"/>
</dbReference>
<dbReference type="GO" id="GO:0031533">
    <property type="term" value="C:mRNA capping enzyme complex"/>
    <property type="evidence" value="ECO:0000318"/>
    <property type="project" value="GO_Central"/>
</dbReference>
<dbReference type="GO" id="GO:0016887">
    <property type="term" value="F:ATP hydrolysis activity"/>
    <property type="evidence" value="ECO:0000314"/>
    <property type="project" value="CGD"/>
</dbReference>
<dbReference type="GO" id="GO:0140818">
    <property type="term" value="F:mRNA 5'-triphosphate monophosphatase activity"/>
    <property type="evidence" value="ECO:0007669"/>
    <property type="project" value="RHEA"/>
</dbReference>
<dbReference type="GO" id="GO:0004651">
    <property type="term" value="F:polynucleotide 5'-phosphatase activity"/>
    <property type="evidence" value="ECO:0000314"/>
    <property type="project" value="CGD"/>
</dbReference>
<dbReference type="GO" id="GO:0006370">
    <property type="term" value="P:7-methylguanosine mRNA capping"/>
    <property type="evidence" value="ECO:0000314"/>
    <property type="project" value="CGD"/>
</dbReference>
<dbReference type="CDD" id="cd07470">
    <property type="entry name" value="CYTH-like_mRNA_RTPase"/>
    <property type="match status" value="1"/>
</dbReference>
<dbReference type="FunFam" id="3.20.100.10:FF:000010">
    <property type="entry name" value="mRNA capping enzyme subunit beta, putative"/>
    <property type="match status" value="1"/>
</dbReference>
<dbReference type="Gene3D" id="3.20.100.10">
    <property type="entry name" value="mRNA triphosphatase Cet1-like"/>
    <property type="match status" value="1"/>
</dbReference>
<dbReference type="InterPro" id="IPR040343">
    <property type="entry name" value="Cet1/Ctl1"/>
</dbReference>
<dbReference type="InterPro" id="IPR033469">
    <property type="entry name" value="CYTH-like_dom_sf"/>
</dbReference>
<dbReference type="InterPro" id="IPR004206">
    <property type="entry name" value="mRNA_triPase_Cet1"/>
</dbReference>
<dbReference type="InterPro" id="IPR037009">
    <property type="entry name" value="mRNA_triPase_Cet1_sf"/>
</dbReference>
<dbReference type="PANTHER" id="PTHR28118:SF1">
    <property type="entry name" value="POLYNUCLEOTIDE 5'-TRIPHOSPHATASE CTL1-RELATED"/>
    <property type="match status" value="1"/>
</dbReference>
<dbReference type="PANTHER" id="PTHR28118">
    <property type="entry name" value="POLYNUCLEOTIDE 5'-TRIPHOSPHATASE-RELATED"/>
    <property type="match status" value="1"/>
</dbReference>
<dbReference type="Pfam" id="PF02940">
    <property type="entry name" value="mRNA_triPase"/>
    <property type="match status" value="1"/>
</dbReference>
<dbReference type="SUPFAM" id="SSF55154">
    <property type="entry name" value="CYTH-like phosphatases"/>
    <property type="match status" value="1"/>
</dbReference>
<sequence>MNVGSILNDDPPSSGNANGNDDNTKIIKSPTAYHKPSVHERHSITSMLNDTPSDSTPTKKPEPTISPEFRKPSISSLTSPSVAHKPPPLPPSSSSVGSSEHSSARSSPAITKRNSIANIIDAYEEPATKTEKKAELNSPKINQSTPVPKLEEHENDTNKVEKVVDSAPEPKPKKEPQPVFDDQDDDLTKIKKLKQSKKPRRYETPPIWAQRWVPPNRQKEETNVDDGNEAITRLSEKPVFDYTTTRSVDLECSITGMIPPSSITRKIAEWVYANFSNVEEKSKRNVELELKFGKIIDKRSGNRIDLNVVTECIFTDHSSVFFDMQVEEVAWKEITKFLDELEKSFQEGKKGRKFKTLESDNTDSFYQLGRKGEHPKRIRVTKDNLLSPPRLVAIQKERVADLYIHNPGSLFDLRLSMSLEIPVPQGNIESIITKNKPEMVREKKRISYTHPPTITKFDLTRVIGNKTEDKYEVELEAGVMEIFAAIDKIQKGVDNLRLEELIEVFLNNARTLNNRLNKIC</sequence>
<name>CET1_CANAL</name>
<protein>
    <recommendedName>
        <fullName>mRNA-capping enzyme subunit beta</fullName>
        <ecNumber evidence="2">3.6.1.74</ecNumber>
    </recommendedName>
    <alternativeName>
        <fullName>mRNA 5'-phosphatase</fullName>
    </alternativeName>
    <alternativeName>
        <fullName>mRNA 5'-triphosphate monophosphatase</fullName>
    </alternativeName>
</protein>
<keyword id="KW-0378">Hydrolase</keyword>
<keyword id="KW-0506">mRNA capping</keyword>
<keyword id="KW-0507">mRNA processing</keyword>
<keyword id="KW-0539">Nucleus</keyword>
<keyword id="KW-1185">Reference proteome</keyword>
<evidence type="ECO:0000250" key="1"/>
<evidence type="ECO:0000250" key="2">
    <source>
        <dbReference type="UniProtKB" id="O13297"/>
    </source>
</evidence>
<evidence type="ECO:0000256" key="3">
    <source>
        <dbReference type="SAM" id="MobiDB-lite"/>
    </source>
</evidence>
<evidence type="ECO:0000305" key="4"/>
<proteinExistence type="inferred from homology"/>
<feature type="chain" id="PRO_0000210112" description="mRNA-capping enzyme subunit beta">
    <location>
        <begin position="1"/>
        <end position="520"/>
    </location>
</feature>
<feature type="region of interest" description="Disordered" evidence="3">
    <location>
        <begin position="1"/>
        <end position="185"/>
    </location>
</feature>
<feature type="compositionally biased region" description="Polar residues" evidence="3">
    <location>
        <begin position="11"/>
        <end position="21"/>
    </location>
</feature>
<feature type="compositionally biased region" description="Polar residues" evidence="3">
    <location>
        <begin position="44"/>
        <end position="56"/>
    </location>
</feature>
<feature type="compositionally biased region" description="Low complexity" evidence="3">
    <location>
        <begin position="92"/>
        <end position="108"/>
    </location>
</feature>
<feature type="compositionally biased region" description="Basic and acidic residues" evidence="3">
    <location>
        <begin position="126"/>
        <end position="135"/>
    </location>
</feature>
<feature type="compositionally biased region" description="Basic and acidic residues" evidence="3">
    <location>
        <begin position="149"/>
        <end position="176"/>
    </location>
</feature>
<feature type="sequence variant" description="In strain: IFO 1060.">
    <original>P</original>
    <variation>S</variation>
    <location>
        <position position="12"/>
    </location>
</feature>